<proteinExistence type="inferred from homology"/>
<protein>
    <recommendedName>
        <fullName evidence="1">2-dehydro-3-deoxyphosphooctonate aldolase</fullName>
        <ecNumber evidence="1">2.5.1.55</ecNumber>
    </recommendedName>
    <alternativeName>
        <fullName evidence="1">3-deoxy-D-manno-octulosonic acid 8-phosphate synthase</fullName>
    </alternativeName>
    <alternativeName>
        <fullName evidence="1">KDO-8-phosphate synthase</fullName>
        <shortName evidence="1">KDO 8-P synthase</shortName>
        <shortName evidence="1">KDOPS</shortName>
    </alternativeName>
    <alternativeName>
        <fullName evidence="1">Phospho-2-dehydro-3-deoxyoctonate aldolase</fullName>
    </alternativeName>
</protein>
<comment type="catalytic activity">
    <reaction evidence="1">
        <text>D-arabinose 5-phosphate + phosphoenolpyruvate + H2O = 3-deoxy-alpha-D-manno-2-octulosonate-8-phosphate + phosphate</text>
        <dbReference type="Rhea" id="RHEA:14053"/>
        <dbReference type="ChEBI" id="CHEBI:15377"/>
        <dbReference type="ChEBI" id="CHEBI:43474"/>
        <dbReference type="ChEBI" id="CHEBI:57693"/>
        <dbReference type="ChEBI" id="CHEBI:58702"/>
        <dbReference type="ChEBI" id="CHEBI:85985"/>
        <dbReference type="EC" id="2.5.1.55"/>
    </reaction>
</comment>
<comment type="pathway">
    <text evidence="1">Carbohydrate biosynthesis; 3-deoxy-D-manno-octulosonate biosynthesis; 3-deoxy-D-manno-octulosonate from D-ribulose 5-phosphate: step 2/3.</text>
</comment>
<comment type="pathway">
    <text evidence="1">Bacterial outer membrane biogenesis; lipopolysaccharide biosynthesis.</text>
</comment>
<comment type="subcellular location">
    <subcellularLocation>
        <location evidence="1">Cytoplasm</location>
    </subcellularLocation>
</comment>
<comment type="similarity">
    <text evidence="1">Belongs to the KdsA family.</text>
</comment>
<keyword id="KW-0963">Cytoplasm</keyword>
<keyword id="KW-0448">Lipopolysaccharide biosynthesis</keyword>
<keyword id="KW-0808">Transferase</keyword>
<evidence type="ECO:0000255" key="1">
    <source>
        <dbReference type="HAMAP-Rule" id="MF_00056"/>
    </source>
</evidence>
<accession>Q6FAT8</accession>
<gene>
    <name evidence="1" type="primary">kdsA</name>
    <name type="ordered locus">ACIAD2002</name>
</gene>
<feature type="chain" id="PRO_0000187096" description="2-dehydro-3-deoxyphosphooctonate aldolase">
    <location>
        <begin position="1"/>
        <end position="285"/>
    </location>
</feature>
<dbReference type="EC" id="2.5.1.55" evidence="1"/>
<dbReference type="EMBL" id="CR543861">
    <property type="protein sequence ID" value="CAG68825.1"/>
    <property type="molecule type" value="Genomic_DNA"/>
</dbReference>
<dbReference type="RefSeq" id="WP_004927353.1">
    <property type="nucleotide sequence ID" value="NC_005966.1"/>
</dbReference>
<dbReference type="SMR" id="Q6FAT8"/>
<dbReference type="STRING" id="202950.GCA_001485005_00369"/>
<dbReference type="GeneID" id="45234362"/>
<dbReference type="KEGG" id="aci:ACIAD2002"/>
<dbReference type="eggNOG" id="COG2877">
    <property type="taxonomic scope" value="Bacteria"/>
</dbReference>
<dbReference type="HOGENOM" id="CLU_036666_0_0_6"/>
<dbReference type="OrthoDB" id="9776934at2"/>
<dbReference type="BioCyc" id="ASP62977:ACIAD_RS09215-MONOMER"/>
<dbReference type="UniPathway" id="UPA00030"/>
<dbReference type="UniPathway" id="UPA00357">
    <property type="reaction ID" value="UER00474"/>
</dbReference>
<dbReference type="Proteomes" id="UP000000430">
    <property type="component" value="Chromosome"/>
</dbReference>
<dbReference type="GO" id="GO:0005737">
    <property type="term" value="C:cytoplasm"/>
    <property type="evidence" value="ECO:0007669"/>
    <property type="project" value="UniProtKB-SubCell"/>
</dbReference>
<dbReference type="GO" id="GO:0008676">
    <property type="term" value="F:3-deoxy-8-phosphooctulonate synthase activity"/>
    <property type="evidence" value="ECO:0007669"/>
    <property type="project" value="UniProtKB-UniRule"/>
</dbReference>
<dbReference type="GO" id="GO:0019294">
    <property type="term" value="P:keto-3-deoxy-D-manno-octulosonic acid biosynthetic process"/>
    <property type="evidence" value="ECO:0007669"/>
    <property type="project" value="UniProtKB-UniRule"/>
</dbReference>
<dbReference type="Gene3D" id="3.20.20.70">
    <property type="entry name" value="Aldolase class I"/>
    <property type="match status" value="1"/>
</dbReference>
<dbReference type="HAMAP" id="MF_00056">
    <property type="entry name" value="KDO8P_synth"/>
    <property type="match status" value="1"/>
</dbReference>
<dbReference type="InterPro" id="IPR013785">
    <property type="entry name" value="Aldolase_TIM"/>
</dbReference>
<dbReference type="InterPro" id="IPR006218">
    <property type="entry name" value="DAHP1/KDSA"/>
</dbReference>
<dbReference type="InterPro" id="IPR006269">
    <property type="entry name" value="KDO8P_synthase"/>
</dbReference>
<dbReference type="NCBIfam" id="TIGR01362">
    <property type="entry name" value="KDO8P_synth"/>
    <property type="match status" value="1"/>
</dbReference>
<dbReference type="NCBIfam" id="NF003543">
    <property type="entry name" value="PRK05198.1"/>
    <property type="match status" value="1"/>
</dbReference>
<dbReference type="PANTHER" id="PTHR21057">
    <property type="entry name" value="PHOSPHO-2-DEHYDRO-3-DEOXYHEPTONATE ALDOLASE"/>
    <property type="match status" value="1"/>
</dbReference>
<dbReference type="Pfam" id="PF00793">
    <property type="entry name" value="DAHP_synth_1"/>
    <property type="match status" value="1"/>
</dbReference>
<dbReference type="SUPFAM" id="SSF51569">
    <property type="entry name" value="Aldolase"/>
    <property type="match status" value="1"/>
</dbReference>
<organism>
    <name type="scientific">Acinetobacter baylyi (strain ATCC 33305 / BD413 / ADP1)</name>
    <dbReference type="NCBI Taxonomy" id="62977"/>
    <lineage>
        <taxon>Bacteria</taxon>
        <taxon>Pseudomonadati</taxon>
        <taxon>Pseudomonadota</taxon>
        <taxon>Gammaproteobacteria</taxon>
        <taxon>Moraxellales</taxon>
        <taxon>Moraxellaceae</taxon>
        <taxon>Acinetobacter</taxon>
    </lineage>
</organism>
<reference key="1">
    <citation type="journal article" date="2004" name="Nucleic Acids Res.">
        <title>Unique features revealed by the genome sequence of Acinetobacter sp. ADP1, a versatile and naturally transformation competent bacterium.</title>
        <authorList>
            <person name="Barbe V."/>
            <person name="Vallenet D."/>
            <person name="Fonknechten N."/>
            <person name="Kreimeyer A."/>
            <person name="Oztas S."/>
            <person name="Labarre L."/>
            <person name="Cruveiller S."/>
            <person name="Robert C."/>
            <person name="Duprat S."/>
            <person name="Wincker P."/>
            <person name="Ornston L.N."/>
            <person name="Weissenbach J."/>
            <person name="Marliere P."/>
            <person name="Cohen G.N."/>
            <person name="Medigue C."/>
        </authorList>
    </citation>
    <scope>NUCLEOTIDE SEQUENCE [LARGE SCALE GENOMIC DNA]</scope>
    <source>
        <strain>ATCC 33305 / BD413 / ADP1</strain>
    </source>
</reference>
<sequence>MSQLKPQEIVRLGDIQMANHLPFVLFGGMNVLESKDLAFEIAETYVDICKRLEIPYVFKASFDKANRSSLHSFRGPGLEKGIEWLGEIKKHFNVPIITDVHEPYQAAPVAEVADIIQLPAFLSRQTDLVEAMAKTQAIINIKKAQFLSPREMNHILNKCLEAGNDKLILCERGTSFGYNNLVVDMLGFDTMKEMNVPVFFDVTHALQTPGGRADSAGGRRAQITTLARAGMATGLAGLFLEAHPDPEKAKCDGPCALRLSQLEPFLAQLKELDALVKGFKKLDTH</sequence>
<name>KDSA_ACIAD</name>